<comment type="function">
    <text evidence="2 3 4 10 12">Molecular chaperone that interacts specifically with outer membrane proteins, thus maintaining the solubility of early folding intermediates during passage through the periplasm. Required for the efficient release of OmpA from the inner membrane, the maintenance of its solubility in the periplasm, and, in association with lipopolysaccharide (LPS), for the efficient folding and insertion of OmpA into the outer membrane.</text>
</comment>
<comment type="subunit">
    <text evidence="5 6 7">Homotrimer. Interacts with OmpA. Interacts with PhoE during its translocation across the inner membrane, but, in contrast to OmpA, release of PhoE from the inner membrane is not dependent on skp. Also interacts with LamB, OmpC and OmpF.</text>
</comment>
<comment type="interaction">
    <interactant intactId="EBI-548242">
        <id>P0AEU7</id>
    </interactant>
    <interactant intactId="EBI-371347">
        <id>P0A910</id>
        <label>ompA</label>
    </interactant>
    <organismsDiffer>false</organismsDiffer>
    <experiments>6</experiments>
</comment>
<comment type="interaction">
    <interactant intactId="EBI-548242">
        <id>P0AEU7</id>
    </interactant>
    <interactant intactId="EBI-552413">
        <id>P0A917</id>
        <label>ompX</label>
    </interactant>
    <organismsDiffer>false</organismsDiffer>
    <experiments>2</experiments>
</comment>
<comment type="interaction">
    <interactant intactId="EBI-548242">
        <id>P0AEU7</id>
    </interactant>
    <interactant intactId="EBI-548242">
        <id>P0AEU7</id>
        <label>skp</label>
    </interactant>
    <organismsDiffer>false</organismsDiffer>
    <experiments>3</experiments>
</comment>
<comment type="subcellular location">
    <subcellularLocation>
        <location evidence="8 10">Periplasm</location>
    </subcellularLocation>
</comment>
<comment type="domain">
    <text>Composed of a compact central beta-barrel domain with long alpha-helical extensions that form a three-pronged structure around an internal cavity. Substrate proteins may be bound in this cavity.</text>
</comment>
<comment type="miscellaneous">
    <text>Does not require ATP for its activity.</text>
</comment>
<comment type="similarity">
    <text evidence="13">Belongs to the Skp family.</text>
</comment>
<comment type="caution">
    <text evidence="13">Was originally thought to bind DNA. It was probably an artifact due to the cationic nature of skp.</text>
</comment>
<sequence length="161" mass="17688">MKKWLLAAGLGLALATSAQAADKIAIVNMGSLFQQVAQKTGVSNTLENEFKGRASELQRMETDLQAKMKKLQSMKAGSDRTKLEKDVMAQRQTFAQKAQAFEQDRARRSNEERGKLVTRIQTAVKSVANSQDIDLVVDANAVAYNSSDVKDITADVLKQVK</sequence>
<name>SKP_ECOLI</name>
<accession>P0AEU7</accession>
<accession>P11457</accession>
<reference key="1">
    <citation type="journal article" date="1988" name="Gene">
        <title>Cloning and sequencing of the gene for the DNA-binding 17K protein of Escherichia coli.</title>
        <authorList>
            <person name="Holck A."/>
            <person name="Kleppe K."/>
        </authorList>
    </citation>
    <scope>NUCLEOTIDE SEQUENCE [GENOMIC DNA]</scope>
    <scope>PROTEIN SEQUENCE OF 21-40</scope>
</reference>
<reference key="2">
    <citation type="journal article" date="1991" name="J. Bacteriol.">
        <title>The ompH gene of Yersinia enterocolitica: cloning, sequencing, expression, and comparison with known enterobacterial ompH sequences.</title>
        <authorList>
            <person name="Hirvas L."/>
            <person name="Koski P."/>
            <person name="Vaara M."/>
        </authorList>
    </citation>
    <scope>NUCLEOTIDE SEQUENCE [GENOMIC DNA]</scope>
</reference>
<reference key="3">
    <citation type="submission" date="1996-02" db="EMBL/GenBank/DDBJ databases">
        <title>Systematic sequencing of the Escherichia coli genome: analysis of the 4.0 - 6.0 min (189,987 - 281,416bp) region.</title>
        <authorList>
            <person name="Takemoto K."/>
            <person name="Mori H."/>
            <person name="Murayama N."/>
            <person name="Kataoka K."/>
            <person name="Yano M."/>
            <person name="Itoh T."/>
            <person name="Yamamoto Y."/>
            <person name="Inokuchi H."/>
            <person name="Miki T."/>
            <person name="Hatada E."/>
            <person name="Fukuda R."/>
            <person name="Ichihara S."/>
            <person name="Mizuno T."/>
            <person name="Makino K."/>
            <person name="Nakata A."/>
            <person name="Yura T."/>
            <person name="Sampei G."/>
            <person name="Mizobuchi K."/>
        </authorList>
    </citation>
    <scope>NUCLEOTIDE SEQUENCE [LARGE SCALE GENOMIC DNA]</scope>
    <source>
        <strain>K12 / W3110 / ATCC 27325 / DSM 5911</strain>
    </source>
</reference>
<reference key="4">
    <citation type="submission" date="1997-01" db="EMBL/GenBank/DDBJ databases">
        <title>Sequence of minutes 4-25 of Escherichia coli.</title>
        <authorList>
            <person name="Chung E."/>
            <person name="Allen E."/>
            <person name="Araujo R."/>
            <person name="Aparicio A.M."/>
            <person name="Davis K."/>
            <person name="Duncan M."/>
            <person name="Federspiel N."/>
            <person name="Hyman R."/>
            <person name="Kalman S."/>
            <person name="Komp C."/>
            <person name="Kurdi O."/>
            <person name="Lew H."/>
            <person name="Lin D."/>
            <person name="Namath A."/>
            <person name="Oefner P."/>
            <person name="Roberts D."/>
            <person name="Schramm S."/>
            <person name="Davis R.W."/>
        </authorList>
    </citation>
    <scope>NUCLEOTIDE SEQUENCE [LARGE SCALE GENOMIC DNA]</scope>
    <source>
        <strain>K12 / MG1655 / ATCC 47076</strain>
    </source>
</reference>
<reference key="5">
    <citation type="journal article" date="1997" name="Science">
        <title>The complete genome sequence of Escherichia coli K-12.</title>
        <authorList>
            <person name="Blattner F.R."/>
            <person name="Plunkett G. III"/>
            <person name="Bloch C.A."/>
            <person name="Perna N.T."/>
            <person name="Burland V."/>
            <person name="Riley M."/>
            <person name="Collado-Vides J."/>
            <person name="Glasner J.D."/>
            <person name="Rode C.K."/>
            <person name="Mayhew G.F."/>
            <person name="Gregor J."/>
            <person name="Davis N.W."/>
            <person name="Kirkpatrick H.A."/>
            <person name="Goeden M.A."/>
            <person name="Rose D.J."/>
            <person name="Mau B."/>
            <person name="Shao Y."/>
        </authorList>
    </citation>
    <scope>NUCLEOTIDE SEQUENCE [LARGE SCALE GENOMIC DNA]</scope>
    <source>
        <strain>K12 / MG1655 / ATCC 47076</strain>
    </source>
</reference>
<reference key="6">
    <citation type="journal article" date="2006" name="Mol. Syst. Biol.">
        <title>Highly accurate genome sequences of Escherichia coli K-12 strains MG1655 and W3110.</title>
        <authorList>
            <person name="Hayashi K."/>
            <person name="Morooka N."/>
            <person name="Yamamoto Y."/>
            <person name="Fujita K."/>
            <person name="Isono K."/>
            <person name="Choi S."/>
            <person name="Ohtsubo E."/>
            <person name="Baba T."/>
            <person name="Wanner B.L."/>
            <person name="Mori H."/>
            <person name="Horiuchi T."/>
        </authorList>
    </citation>
    <scope>NUCLEOTIDE SEQUENCE [LARGE SCALE GENOMIC DNA]</scope>
    <source>
        <strain>K12 / W3110 / ATCC 27325 / DSM 5911</strain>
    </source>
</reference>
<reference key="7">
    <citation type="journal article" date="1991" name="J. Bacteriol.">
        <title>Cloning and nucleotide sequence of the firA gene and the firA200(Ts) allele from Escherichia coli.</title>
        <authorList>
            <person name="Dicker I.B."/>
            <person name="Seetharam S.R."/>
        </authorList>
    </citation>
    <scope>NUCLEOTIDE SEQUENCE [GENOMIC DNA] OF 72-161</scope>
    <source>
        <strain>K12 / MG1655 / ATCC 47076</strain>
    </source>
</reference>
<reference key="8">
    <citation type="journal article" date="1997" name="Electrophoresis">
        <title>Comparing the predicted and observed properties of proteins encoded in the genome of Escherichia coli K-12.</title>
        <authorList>
            <person name="Link A.J."/>
            <person name="Robison K."/>
            <person name="Church G.M."/>
        </authorList>
    </citation>
    <scope>PROTEIN SEQUENCE OF 21-32</scope>
    <source>
        <strain>K12 / EMG2</strain>
    </source>
</reference>
<reference key="9">
    <citation type="journal article" date="1990" name="FEBS Lett.">
        <title>Bacterial 'histone-like protein I' (HLP-I) is an outer membrane constituent?</title>
        <authorList>
            <person name="Hirvas L."/>
            <person name="Coleman J."/>
            <person name="Koski P."/>
            <person name="Vaara M."/>
        </authorList>
    </citation>
    <scope>DISCUSSION OF SUBCELLULAR LOCATION</scope>
    <source>
        <strain>K12 / JM109 / ATCC 53323</strain>
    </source>
</reference>
<reference key="10">
    <citation type="journal article" date="1991" name="Mol. Microbiol.">
        <title>Skp is a periplasmic Escherichia coli protein requiring SecA and SecY for export.</title>
        <authorList>
            <person name="Thome B.M."/>
            <person name="Mueller M."/>
        </authorList>
    </citation>
    <scope>SUBCELLULAR LOCATION</scope>
</reference>
<reference key="11">
    <citation type="journal article" date="1996" name="Mol. Microbiol.">
        <title>A periplasmic protein (Skp) of Escherichia coli selectively binds a class of outer membrane proteins.</title>
        <authorList>
            <person name="Chen R."/>
            <person name="Henning U."/>
        </authorList>
    </citation>
    <scope>FUNCTION</scope>
    <scope>SUBCELLULAR LOCATION</scope>
    <source>
        <strain>K12 / MC4100 / ATCC 35695 / DSM 6574</strain>
    </source>
</reference>
<reference key="12">
    <citation type="journal article" date="1999" name="Eur. J. Biochem.">
        <title>Affinity of the periplasmic chaperone Skp of Escherichia coli for phospholipids, lipopolysaccharides and non-native outer membrane proteins. Role of Skp in the biogenesis of outer membrane protein.</title>
        <authorList>
            <person name="de Cock H."/>
            <person name="Schaefer U."/>
            <person name="Potgeter M."/>
            <person name="Demel R."/>
            <person name="Mueller M."/>
            <person name="Tommassen J."/>
        </authorList>
    </citation>
    <scope>FUNCTION</scope>
    <source>
        <strain>K12 / MC4100 / ATCC 35695 / DSM 6574</strain>
    </source>
</reference>
<reference key="13">
    <citation type="journal article" date="1999" name="J. Biol. Chem.">
        <title>Skp, a molecular chaperone of Gram-negative bacteria, is required for the formation of soluble periplasmic intermediates of outer membrane proteins.</title>
        <authorList>
            <person name="Schaefer U."/>
            <person name="Beck K."/>
            <person name="Mueller M."/>
        </authorList>
    </citation>
    <scope>FUNCTION</scope>
    <source>
        <strain>K12 / MC4100 / ATCC 35695 / DSM 6574</strain>
    </source>
</reference>
<reference key="14">
    <citation type="journal article" date="2001" name="J. Biol. Chem.">
        <title>The early interaction of the outer membrane protein phoE with the periplasmic chaperone Skp occurs at the cytoplasmic membrane.</title>
        <authorList>
            <person name="Harms N."/>
            <person name="Koningstein G."/>
            <person name="Dontje W."/>
            <person name="Mueller M."/>
            <person name="Oudega B."/>
            <person name="Luirink J."/>
            <person name="de Cock H."/>
        </authorList>
    </citation>
    <scope>FUNCTION</scope>
    <source>
        <strain>K12 / MC4100 / ATCC 35695 / DSM 6574</strain>
    </source>
</reference>
<reference key="15">
    <citation type="journal article" date="2003" name="J. Biol. Chem.">
        <title>Folding and insertion of the outer membrane protein OmpA is assisted by the chaperone Skp and by lipopolysaccharide.</title>
        <authorList>
            <person name="Bulieris P.V."/>
            <person name="Behrens S."/>
            <person name="Holst O."/>
            <person name="Kleinschmidt J.H."/>
        </authorList>
    </citation>
    <scope>FUNCTION</scope>
</reference>
<reference key="16">
    <citation type="journal article" date="2004" name="Biol. Chem.">
        <title>The periplasmic E. coli chaperone Skp is a trimer in solution: biophysical and preliminary crystallographic characterization.</title>
        <authorList>
            <person name="Schlapschy M."/>
            <person name="Dommel M.K."/>
            <person name="Hadian K."/>
            <person name="Fogarasi M."/>
            <person name="Korndoerfer I.P."/>
            <person name="Skerra A."/>
        </authorList>
    </citation>
    <scope>SUBUNIT</scope>
    <scope>PRELIMINARY X-RAY CRYSTALLOGRAPHY</scope>
    <source>
        <strain>K12</strain>
    </source>
</reference>
<reference key="17">
    <citation type="journal article" date="2004" name="Mol. Cell">
        <title>Crystal structure of Skp, a prefoldin-like chaperone that protects soluble and membrane proteins from aggregation.</title>
        <authorList>
            <person name="Walton T.A."/>
            <person name="Sousa M.C."/>
        </authorList>
    </citation>
    <scope>X-RAY CRYSTALLOGRAPHY (2.3 ANGSTROMS) OF 21-161</scope>
    <scope>SUBUNIT</scope>
    <source>
        <strain>K12</strain>
    </source>
</reference>
<reference key="18">
    <citation type="journal article" date="2004" name="Nat. Struct. Mol. Biol.">
        <title>Structure of the periplasmic chaperone Skp suggests functional similarity with cytosolic chaperones despite differing architecture.</title>
        <authorList>
            <person name="Korndoerfer I.P."/>
            <person name="Dommel M.K."/>
            <person name="Skerra A."/>
        </authorList>
    </citation>
    <scope>X-RAY CRYSTALLOGRAPHY (2.35 ANGSTROMS) OF 21-161</scope>
    <scope>SUBUNIT</scope>
</reference>
<proteinExistence type="evidence at protein level"/>
<evidence type="ECO:0000255" key="1"/>
<evidence type="ECO:0000269" key="2">
    <source>
    </source>
</evidence>
<evidence type="ECO:0000269" key="3">
    <source>
    </source>
</evidence>
<evidence type="ECO:0000269" key="4">
    <source>
    </source>
</evidence>
<evidence type="ECO:0000269" key="5">
    <source>
    </source>
</evidence>
<evidence type="ECO:0000269" key="6">
    <source>
    </source>
</evidence>
<evidence type="ECO:0000269" key="7">
    <source>
    </source>
</evidence>
<evidence type="ECO:0000269" key="8">
    <source>
    </source>
</evidence>
<evidence type="ECO:0000269" key="9">
    <source>
    </source>
</evidence>
<evidence type="ECO:0000269" key="10">
    <source>
    </source>
</evidence>
<evidence type="ECO:0000269" key="11">
    <source>
    </source>
</evidence>
<evidence type="ECO:0000269" key="12">
    <source>
    </source>
</evidence>
<evidence type="ECO:0000305" key="13"/>
<evidence type="ECO:0007829" key="14">
    <source>
        <dbReference type="PDB" id="1SG2"/>
    </source>
</evidence>
<evidence type="ECO:0007829" key="15">
    <source>
        <dbReference type="PDB" id="1U2M"/>
    </source>
</evidence>
<keyword id="KW-0002">3D-structure</keyword>
<keyword id="KW-0143">Chaperone</keyword>
<keyword id="KW-0903">Direct protein sequencing</keyword>
<keyword id="KW-0574">Periplasm</keyword>
<keyword id="KW-1185">Reference proteome</keyword>
<keyword id="KW-0732">Signal</keyword>
<dbReference type="EMBL" id="M21118">
    <property type="protein sequence ID" value="AAA24630.1"/>
    <property type="molecule type" value="Genomic_DNA"/>
</dbReference>
<dbReference type="EMBL" id="X75465">
    <property type="protein sequence ID" value="CAA53207.1"/>
    <property type="molecule type" value="Genomic_DNA"/>
</dbReference>
<dbReference type="EMBL" id="U70214">
    <property type="protein sequence ID" value="AAB08607.1"/>
    <property type="molecule type" value="Genomic_DNA"/>
</dbReference>
<dbReference type="EMBL" id="U00096">
    <property type="protein sequence ID" value="AAC73289.1"/>
    <property type="molecule type" value="Genomic_DNA"/>
</dbReference>
<dbReference type="EMBL" id="AP009048">
    <property type="protein sequence ID" value="BAA77853.1"/>
    <property type="molecule type" value="Genomic_DNA"/>
</dbReference>
<dbReference type="EMBL" id="X54797">
    <property type="protein sequence ID" value="CAA38567.1"/>
    <property type="molecule type" value="Genomic_DNA"/>
</dbReference>
<dbReference type="PIR" id="JT0304">
    <property type="entry name" value="DNEC17"/>
</dbReference>
<dbReference type="RefSeq" id="NP_414720.1">
    <property type="nucleotide sequence ID" value="NC_000913.3"/>
</dbReference>
<dbReference type="RefSeq" id="WP_000758956.1">
    <property type="nucleotide sequence ID" value="NZ_STEB01000032.1"/>
</dbReference>
<dbReference type="PDB" id="1SG2">
    <property type="method" value="X-ray"/>
    <property type="resolution" value="2.35 A"/>
    <property type="chains" value="A/B/C=20-161"/>
</dbReference>
<dbReference type="PDB" id="1U2M">
    <property type="method" value="X-ray"/>
    <property type="resolution" value="2.30 A"/>
    <property type="chains" value="A/B/C=21-161"/>
</dbReference>
<dbReference type="PDBsum" id="1SG2"/>
<dbReference type="PDBsum" id="1U2M"/>
<dbReference type="BMRB" id="P0AEU7"/>
<dbReference type="SASBDB" id="P0AEU7"/>
<dbReference type="SMR" id="P0AEU7"/>
<dbReference type="BioGRID" id="4263427">
    <property type="interactions" value="251"/>
</dbReference>
<dbReference type="BioGRID" id="849261">
    <property type="interactions" value="1"/>
</dbReference>
<dbReference type="DIP" id="DIP-36210N"/>
<dbReference type="FunCoup" id="P0AEU7">
    <property type="interactions" value="301"/>
</dbReference>
<dbReference type="IntAct" id="P0AEU7">
    <property type="interactions" value="31"/>
</dbReference>
<dbReference type="STRING" id="511145.b0178"/>
<dbReference type="jPOST" id="P0AEU7"/>
<dbReference type="PaxDb" id="511145-b0178"/>
<dbReference type="EnsemblBacteria" id="AAC73289">
    <property type="protein sequence ID" value="AAC73289"/>
    <property type="gene ID" value="b0178"/>
</dbReference>
<dbReference type="GeneID" id="93777247"/>
<dbReference type="GeneID" id="944861"/>
<dbReference type="KEGG" id="ecj:JW0173"/>
<dbReference type="KEGG" id="eco:b0178"/>
<dbReference type="KEGG" id="ecoc:C3026_00815"/>
<dbReference type="PATRIC" id="fig|1411691.4.peg.2101"/>
<dbReference type="EchoBASE" id="EB0450"/>
<dbReference type="eggNOG" id="COG2825">
    <property type="taxonomic scope" value="Bacteria"/>
</dbReference>
<dbReference type="HOGENOM" id="CLU_101388_2_0_6"/>
<dbReference type="InParanoid" id="P0AEU7"/>
<dbReference type="OMA" id="MENDLQS"/>
<dbReference type="OrthoDB" id="7061584at2"/>
<dbReference type="PhylomeDB" id="P0AEU7"/>
<dbReference type="BioCyc" id="EcoCyc:EG10455-MONOMER"/>
<dbReference type="BioCyc" id="MetaCyc:EG10455-MONOMER"/>
<dbReference type="EvolutionaryTrace" id="P0AEU7"/>
<dbReference type="PRO" id="PR:P0AEU7"/>
<dbReference type="Proteomes" id="UP000000625">
    <property type="component" value="Chromosome"/>
</dbReference>
<dbReference type="GO" id="GO:0005829">
    <property type="term" value="C:cytosol"/>
    <property type="evidence" value="ECO:0007005"/>
    <property type="project" value="UniProtKB"/>
</dbReference>
<dbReference type="GO" id="GO:0030288">
    <property type="term" value="C:outer membrane-bounded periplasmic space"/>
    <property type="evidence" value="ECO:0000314"/>
    <property type="project" value="EcoliWiki"/>
</dbReference>
<dbReference type="GO" id="GO:0042802">
    <property type="term" value="F:identical protein binding"/>
    <property type="evidence" value="ECO:0000353"/>
    <property type="project" value="IntAct"/>
</dbReference>
<dbReference type="GO" id="GO:0001530">
    <property type="term" value="F:lipopolysaccharide binding"/>
    <property type="evidence" value="ECO:0000353"/>
    <property type="project" value="EcoCyc"/>
</dbReference>
<dbReference type="GO" id="GO:0051082">
    <property type="term" value="F:unfolded protein binding"/>
    <property type="evidence" value="ECO:0000314"/>
    <property type="project" value="EcoCyc"/>
</dbReference>
<dbReference type="GO" id="GO:0061077">
    <property type="term" value="P:chaperone-mediated protein folding"/>
    <property type="evidence" value="ECO:0000314"/>
    <property type="project" value="EcoCyc"/>
</dbReference>
<dbReference type="GO" id="GO:0043165">
    <property type="term" value="P:Gram-negative-bacterium-type cell outer membrane assembly"/>
    <property type="evidence" value="ECO:0000314"/>
    <property type="project" value="EcoCyc"/>
</dbReference>
<dbReference type="GO" id="GO:0006457">
    <property type="term" value="P:protein folding"/>
    <property type="evidence" value="ECO:0000315"/>
    <property type="project" value="EcoliWiki"/>
</dbReference>
<dbReference type="GO" id="GO:0032978">
    <property type="term" value="P:protein insertion into membrane from inner side"/>
    <property type="evidence" value="ECO:0000314"/>
    <property type="project" value="EcoCyc"/>
</dbReference>
<dbReference type="GO" id="GO:0051604">
    <property type="term" value="P:protein maturation"/>
    <property type="evidence" value="ECO:0000314"/>
    <property type="project" value="CACAO"/>
</dbReference>
<dbReference type="GO" id="GO:0050821">
    <property type="term" value="P:protein stabilization"/>
    <property type="evidence" value="ECO:0000314"/>
    <property type="project" value="EcoCyc"/>
</dbReference>
<dbReference type="FunFam" id="3.30.910.20:FF:000001">
    <property type="entry name" value="Molecular chaperone Skp"/>
    <property type="match status" value="1"/>
</dbReference>
<dbReference type="Gene3D" id="3.30.910.20">
    <property type="entry name" value="Skp domain"/>
    <property type="match status" value="1"/>
</dbReference>
<dbReference type="InterPro" id="IPR005632">
    <property type="entry name" value="Chaperone_Skp"/>
</dbReference>
<dbReference type="InterPro" id="IPR024930">
    <property type="entry name" value="Skp_dom_sf"/>
</dbReference>
<dbReference type="NCBIfam" id="NF008047">
    <property type="entry name" value="PRK10780.1"/>
    <property type="match status" value="1"/>
</dbReference>
<dbReference type="PANTHER" id="PTHR35089">
    <property type="entry name" value="CHAPERONE PROTEIN SKP"/>
    <property type="match status" value="1"/>
</dbReference>
<dbReference type="PANTHER" id="PTHR35089:SF1">
    <property type="entry name" value="CHAPERONE PROTEIN SKP"/>
    <property type="match status" value="1"/>
</dbReference>
<dbReference type="Pfam" id="PF03938">
    <property type="entry name" value="OmpH"/>
    <property type="match status" value="1"/>
</dbReference>
<dbReference type="PIRSF" id="PIRSF002094">
    <property type="entry name" value="OMP26_Skp"/>
    <property type="match status" value="1"/>
</dbReference>
<dbReference type="SMART" id="SM00935">
    <property type="entry name" value="OmpH"/>
    <property type="match status" value="1"/>
</dbReference>
<dbReference type="SUPFAM" id="SSF111384">
    <property type="entry name" value="OmpH-like"/>
    <property type="match status" value="1"/>
</dbReference>
<gene>
    <name type="primary">skp</name>
    <name type="synonym">hlpA</name>
    <name type="synonym">ompH</name>
    <name type="ordered locus">b0178</name>
    <name type="ordered locus">JW0173</name>
</gene>
<feature type="signal peptide" evidence="9 11">
    <location>
        <begin position="1"/>
        <end position="20"/>
    </location>
</feature>
<feature type="chain" id="PRO_0000020176" description="Chaperone protein Skp">
    <location>
        <begin position="21"/>
        <end position="161"/>
    </location>
</feature>
<feature type="region of interest" description="Lipopolysaccharide binding" evidence="1">
    <location>
        <begin position="97"/>
        <end position="108"/>
    </location>
</feature>
<feature type="sequence conflict" description="In Ref. 2; CAA53207." evidence="13" ref="2">
    <original>A</original>
    <variation>L</variation>
    <location>
        <position position="15"/>
    </location>
</feature>
<feature type="sequence conflict" description="In Ref. 2; CAA53207." evidence="13" ref="2">
    <original>V</original>
    <variation>E</variation>
    <location>
        <position position="149"/>
    </location>
</feature>
<feature type="sequence conflict" description="In Ref. 2; CAA53207." evidence="13" ref="2">
    <original>T</original>
    <variation>I</variation>
    <location>
        <position position="153"/>
    </location>
</feature>
<feature type="strand" evidence="15">
    <location>
        <begin position="24"/>
        <end position="27"/>
    </location>
</feature>
<feature type="helix" evidence="15">
    <location>
        <begin position="29"/>
        <end position="40"/>
    </location>
</feature>
<feature type="turn" evidence="15">
    <location>
        <begin position="41"/>
        <end position="46"/>
    </location>
</feature>
<feature type="helix" evidence="15">
    <location>
        <begin position="48"/>
        <end position="65"/>
    </location>
</feature>
<feature type="helix" evidence="15">
    <location>
        <begin position="78"/>
        <end position="90"/>
    </location>
</feature>
<feature type="helix" evidence="15">
    <location>
        <begin position="92"/>
        <end position="104"/>
    </location>
</feature>
<feature type="helix" evidence="15">
    <location>
        <begin position="106"/>
        <end position="130"/>
    </location>
</feature>
<feature type="strand" evidence="15">
    <location>
        <begin position="134"/>
        <end position="138"/>
    </location>
</feature>
<feature type="helix" evidence="15">
    <location>
        <begin position="139"/>
        <end position="141"/>
    </location>
</feature>
<feature type="strand" evidence="15">
    <location>
        <begin position="142"/>
        <end position="145"/>
    </location>
</feature>
<feature type="strand" evidence="14">
    <location>
        <begin position="149"/>
        <end position="151"/>
    </location>
</feature>
<feature type="helix" evidence="15">
    <location>
        <begin position="153"/>
        <end position="159"/>
    </location>
</feature>
<organism>
    <name type="scientific">Escherichia coli (strain K12)</name>
    <dbReference type="NCBI Taxonomy" id="83333"/>
    <lineage>
        <taxon>Bacteria</taxon>
        <taxon>Pseudomonadati</taxon>
        <taxon>Pseudomonadota</taxon>
        <taxon>Gammaproteobacteria</taxon>
        <taxon>Enterobacterales</taxon>
        <taxon>Enterobacteriaceae</taxon>
        <taxon>Escherichia</taxon>
    </lineage>
</organism>
<protein>
    <recommendedName>
        <fullName>Chaperone protein Skp</fullName>
    </recommendedName>
    <alternativeName>
        <fullName>DNA-binding 17 kDa protein</fullName>
    </alternativeName>
    <alternativeName>
        <fullName>Histone-like protein HLP-1</fullName>
    </alternativeName>
    <alternativeName>
        <fullName>Seventeen kilodalton protein</fullName>
    </alternativeName>
</protein>